<reference key="1">
    <citation type="submission" date="2008-04" db="EMBL/GenBank/DDBJ databases">
        <title>Complete sequence of chromosome of Methylobacterium populi BJ001.</title>
        <authorList>
            <consortium name="US DOE Joint Genome Institute"/>
            <person name="Copeland A."/>
            <person name="Lucas S."/>
            <person name="Lapidus A."/>
            <person name="Glavina del Rio T."/>
            <person name="Dalin E."/>
            <person name="Tice H."/>
            <person name="Bruce D."/>
            <person name="Goodwin L."/>
            <person name="Pitluck S."/>
            <person name="Chertkov O."/>
            <person name="Brettin T."/>
            <person name="Detter J.C."/>
            <person name="Han C."/>
            <person name="Kuske C.R."/>
            <person name="Schmutz J."/>
            <person name="Larimer F."/>
            <person name="Land M."/>
            <person name="Hauser L."/>
            <person name="Kyrpides N."/>
            <person name="Mikhailova N."/>
            <person name="Marx C."/>
            <person name="Richardson P."/>
        </authorList>
    </citation>
    <scope>NUCLEOTIDE SEQUENCE [LARGE SCALE GENOMIC DNA]</scope>
    <source>
        <strain>ATCC BAA-705 / NCIMB 13946 / BJ001</strain>
    </source>
</reference>
<name>PIMT_METPB</name>
<evidence type="ECO:0000255" key="1">
    <source>
        <dbReference type="HAMAP-Rule" id="MF_00090"/>
    </source>
</evidence>
<accession>B1ZJW1</accession>
<keyword id="KW-0963">Cytoplasm</keyword>
<keyword id="KW-0489">Methyltransferase</keyword>
<keyword id="KW-0949">S-adenosyl-L-methionine</keyword>
<keyword id="KW-0808">Transferase</keyword>
<comment type="function">
    <text evidence="1">Catalyzes the methyl esterification of L-isoaspartyl residues in peptides and proteins that result from spontaneous decomposition of normal L-aspartyl and L-asparaginyl residues. It plays a role in the repair and/or degradation of damaged proteins.</text>
</comment>
<comment type="catalytic activity">
    <reaction evidence="1">
        <text>[protein]-L-isoaspartate + S-adenosyl-L-methionine = [protein]-L-isoaspartate alpha-methyl ester + S-adenosyl-L-homocysteine</text>
        <dbReference type="Rhea" id="RHEA:12705"/>
        <dbReference type="Rhea" id="RHEA-COMP:12143"/>
        <dbReference type="Rhea" id="RHEA-COMP:12144"/>
        <dbReference type="ChEBI" id="CHEBI:57856"/>
        <dbReference type="ChEBI" id="CHEBI:59789"/>
        <dbReference type="ChEBI" id="CHEBI:90596"/>
        <dbReference type="ChEBI" id="CHEBI:90598"/>
        <dbReference type="EC" id="2.1.1.77"/>
    </reaction>
</comment>
<comment type="subcellular location">
    <subcellularLocation>
        <location evidence="1">Cytoplasm</location>
    </subcellularLocation>
</comment>
<comment type="similarity">
    <text evidence="1">Belongs to the methyltransferase superfamily. L-isoaspartyl/D-aspartyl protein methyltransferase family.</text>
</comment>
<organism>
    <name type="scientific">Methylorubrum populi (strain ATCC BAA-705 / NCIMB 13946 / BJ001)</name>
    <name type="common">Methylobacterium populi</name>
    <dbReference type="NCBI Taxonomy" id="441620"/>
    <lineage>
        <taxon>Bacteria</taxon>
        <taxon>Pseudomonadati</taxon>
        <taxon>Pseudomonadota</taxon>
        <taxon>Alphaproteobacteria</taxon>
        <taxon>Hyphomicrobiales</taxon>
        <taxon>Methylobacteriaceae</taxon>
        <taxon>Methylorubrum</taxon>
    </lineage>
</organism>
<feature type="chain" id="PRO_0000351881" description="Protein-L-isoaspartate O-methyltransferase">
    <location>
        <begin position="1"/>
        <end position="212"/>
    </location>
</feature>
<feature type="active site" evidence="1">
    <location>
        <position position="60"/>
    </location>
</feature>
<sequence length="212" mass="21935">MTDAARARMLETQLIARGIRDAALLDAMGRVAREAFVPAEFAAEAYADGPLPIGAGQTISQPYIVALMIEALALRPGERVLEVGAGCGYAAAVLATMGARIFAIERHAALAEAARARLAALGLAVRLRVGDGHAGWPEAAPFDAILVSAAGSAVPEALKRQLAQGGRLVIPVGPPGGQTLLRLTRRGPERFESRDFGPVSFVPLLRGVGAAG</sequence>
<dbReference type="EC" id="2.1.1.77" evidence="1"/>
<dbReference type="EMBL" id="CP001029">
    <property type="protein sequence ID" value="ACB82875.1"/>
    <property type="molecule type" value="Genomic_DNA"/>
</dbReference>
<dbReference type="SMR" id="B1ZJW1"/>
<dbReference type="STRING" id="441620.Mpop_4779"/>
<dbReference type="KEGG" id="mpo:Mpop_4779"/>
<dbReference type="eggNOG" id="COG2518">
    <property type="taxonomic scope" value="Bacteria"/>
</dbReference>
<dbReference type="HOGENOM" id="CLU_055432_2_0_5"/>
<dbReference type="Proteomes" id="UP000007136">
    <property type="component" value="Chromosome"/>
</dbReference>
<dbReference type="GO" id="GO:0005737">
    <property type="term" value="C:cytoplasm"/>
    <property type="evidence" value="ECO:0007669"/>
    <property type="project" value="UniProtKB-SubCell"/>
</dbReference>
<dbReference type="GO" id="GO:0004719">
    <property type="term" value="F:protein-L-isoaspartate (D-aspartate) O-methyltransferase activity"/>
    <property type="evidence" value="ECO:0007669"/>
    <property type="project" value="UniProtKB-UniRule"/>
</dbReference>
<dbReference type="GO" id="GO:0032259">
    <property type="term" value="P:methylation"/>
    <property type="evidence" value="ECO:0007669"/>
    <property type="project" value="UniProtKB-KW"/>
</dbReference>
<dbReference type="GO" id="GO:0036211">
    <property type="term" value="P:protein modification process"/>
    <property type="evidence" value="ECO:0007669"/>
    <property type="project" value="UniProtKB-UniRule"/>
</dbReference>
<dbReference type="GO" id="GO:0030091">
    <property type="term" value="P:protein repair"/>
    <property type="evidence" value="ECO:0007669"/>
    <property type="project" value="UniProtKB-UniRule"/>
</dbReference>
<dbReference type="FunFam" id="3.40.50.150:FF:000010">
    <property type="entry name" value="Protein-L-isoaspartate O-methyltransferase"/>
    <property type="match status" value="1"/>
</dbReference>
<dbReference type="Gene3D" id="3.40.50.150">
    <property type="entry name" value="Vaccinia Virus protein VP39"/>
    <property type="match status" value="1"/>
</dbReference>
<dbReference type="HAMAP" id="MF_00090">
    <property type="entry name" value="PIMT"/>
    <property type="match status" value="1"/>
</dbReference>
<dbReference type="InterPro" id="IPR000682">
    <property type="entry name" value="PCMT"/>
</dbReference>
<dbReference type="InterPro" id="IPR029063">
    <property type="entry name" value="SAM-dependent_MTases_sf"/>
</dbReference>
<dbReference type="NCBIfam" id="TIGR00080">
    <property type="entry name" value="pimt"/>
    <property type="match status" value="1"/>
</dbReference>
<dbReference type="NCBIfam" id="NF001453">
    <property type="entry name" value="PRK00312.1"/>
    <property type="match status" value="1"/>
</dbReference>
<dbReference type="PANTHER" id="PTHR11579">
    <property type="entry name" value="PROTEIN-L-ISOASPARTATE O-METHYLTRANSFERASE"/>
    <property type="match status" value="1"/>
</dbReference>
<dbReference type="PANTHER" id="PTHR11579:SF0">
    <property type="entry name" value="PROTEIN-L-ISOASPARTATE(D-ASPARTATE) O-METHYLTRANSFERASE"/>
    <property type="match status" value="1"/>
</dbReference>
<dbReference type="Pfam" id="PF01135">
    <property type="entry name" value="PCMT"/>
    <property type="match status" value="1"/>
</dbReference>
<dbReference type="SUPFAM" id="SSF53335">
    <property type="entry name" value="S-adenosyl-L-methionine-dependent methyltransferases"/>
    <property type="match status" value="1"/>
</dbReference>
<dbReference type="PROSITE" id="PS01279">
    <property type="entry name" value="PCMT"/>
    <property type="match status" value="1"/>
</dbReference>
<protein>
    <recommendedName>
        <fullName evidence="1">Protein-L-isoaspartate O-methyltransferase</fullName>
        <ecNumber evidence="1">2.1.1.77</ecNumber>
    </recommendedName>
    <alternativeName>
        <fullName evidence="1">L-isoaspartyl protein carboxyl methyltransferase</fullName>
    </alternativeName>
    <alternativeName>
        <fullName evidence="1">Protein L-isoaspartyl methyltransferase</fullName>
    </alternativeName>
    <alternativeName>
        <fullName evidence="1">Protein-beta-aspartate methyltransferase</fullName>
        <shortName evidence="1">PIMT</shortName>
    </alternativeName>
</protein>
<proteinExistence type="inferred from homology"/>
<gene>
    <name evidence="1" type="primary">pcm</name>
    <name type="ordered locus">Mpop_4779</name>
</gene>